<proteinExistence type="inferred from homology"/>
<organism>
    <name type="scientific">Rabbitpox virus (strain Utrecht)</name>
    <name type="common">RPV</name>
    <dbReference type="NCBI Taxonomy" id="45417"/>
    <lineage>
        <taxon>Viruses</taxon>
        <taxon>Varidnaviria</taxon>
        <taxon>Bamfordvirae</taxon>
        <taxon>Nucleocytoviricota</taxon>
        <taxon>Pokkesviricetes</taxon>
        <taxon>Chitovirales</taxon>
        <taxon>Poxviridae</taxon>
        <taxon>Chordopoxvirinae</taxon>
        <taxon>Orthopoxvirus</taxon>
        <taxon>Vaccinia virus</taxon>
    </lineage>
</organism>
<evidence type="ECO:0000255" key="1">
    <source>
        <dbReference type="PROSITE-ProRule" id="PRU00037"/>
    </source>
</evidence>
<evidence type="ECO:0000305" key="2"/>
<gene>
    <name type="ordered locus">RPXV018</name>
</gene>
<comment type="similarity">
    <text evidence="2">Belongs to the poxviruses Kelch family.</text>
</comment>
<protein>
    <recommendedName>
        <fullName>Kelch repeat protein C2</fullName>
    </recommendedName>
</protein>
<name>C2_RABPU</name>
<keyword id="KW-0880">Kelch repeat</keyword>
<keyword id="KW-0677">Repeat</keyword>
<organismHost>
    <name type="scientific">Oryctolagus cuniculus</name>
    <name type="common">Rabbit</name>
    <dbReference type="NCBI Taxonomy" id="9986"/>
</organismHost>
<sequence>MESVIFSINGEIIQVNKEIITASPYNFFKRIQDHHLKDEAIILNGINYHAFESLLDYMRWKKINITINNVEMILVAAIIIDVPPVVDLCVKTMIHNINSTNCIRMFNFSKRYGIKKLYNASMSEIINNITAVTSDPEFGKLSKDELTTILSHEDVNVNHEDVTAMILLKWIHKNPNDVDIINILHPKFITNTMRNAISLLGLTISKSTKPVTRNGIKHNIVVIKNSDYISTITHYSPRTEYWTIVGNTDRQFYNANVLHNCLYIIGGMINNRHVYSVSRVDLETKKWKTVTNMSSLKSEVSTCVNNGKLYVIGGLEFSISTGVAEYLKHGTSKWIRLPNLITPRYSGASVFVNDDIYVMGGVYTTYEKYVVLNDVECFTKNRWIKKSPMPRHHSIVYAVEYDGDIYVITGITHETRNYLYKYIVKEDKWIELYMYFNHVGKMFVCSCGDYILIIADAKYEYYPKSNTWNLFDMSTRNIEYYDMFTKDETPKCNVTHKSLPSFLSNCEKQFLQ</sequence>
<feature type="chain" id="PRO_0000119164" description="Kelch repeat protein C2">
    <location>
        <begin position="1"/>
        <end position="512"/>
    </location>
</feature>
<feature type="domain" description="BTB" evidence="1">
    <location>
        <begin position="2"/>
        <end position="67"/>
    </location>
</feature>
<feature type="domain" description="BACK">
    <location>
        <begin position="102"/>
        <end position="176"/>
    </location>
</feature>
<feature type="repeat" description="Kelch 1">
    <location>
        <begin position="216"/>
        <end position="261"/>
    </location>
</feature>
<feature type="repeat" description="Kelch 2">
    <location>
        <begin position="262"/>
        <end position="307"/>
    </location>
</feature>
<feature type="repeat" description="Kelch 3">
    <location>
        <begin position="309"/>
        <end position="354"/>
    </location>
</feature>
<feature type="repeat" description="Kelch 4">
    <location>
        <begin position="356"/>
        <end position="403"/>
    </location>
</feature>
<feature type="repeat" description="Kelch 5">
    <location>
        <begin position="405"/>
        <end position="449"/>
    </location>
</feature>
<feature type="repeat" description="Kelch 6">
    <location>
        <begin position="452"/>
        <end position="498"/>
    </location>
</feature>
<reference key="1">
    <citation type="journal article" date="2005" name="J. Gen. Virol.">
        <title>Complete coding sequences of the rabbitpox virus genome.</title>
        <authorList>
            <person name="Li G."/>
            <person name="Chen N."/>
            <person name="Roper R.L."/>
            <person name="Feng Z."/>
            <person name="Hunter A.L."/>
            <person name="Danila M."/>
            <person name="Lefkowitz E.J."/>
            <person name="Buller R.M.L."/>
            <person name="Upton C."/>
        </authorList>
    </citation>
    <scope>NUCLEOTIDE SEQUENCE [LARGE SCALE GENOMIC DNA]</scope>
</reference>
<accession>Q6RZS3</accession>
<dbReference type="EMBL" id="AY484669">
    <property type="protein sequence ID" value="AAS49731.1"/>
    <property type="molecule type" value="Genomic_DNA"/>
</dbReference>
<dbReference type="SMR" id="Q6RZS3"/>
<dbReference type="Proteomes" id="UP000166173">
    <property type="component" value="Segment"/>
</dbReference>
<dbReference type="Gene3D" id="1.25.40.420">
    <property type="match status" value="1"/>
</dbReference>
<dbReference type="Gene3D" id="2.120.10.80">
    <property type="entry name" value="Kelch-type beta propeller"/>
    <property type="match status" value="1"/>
</dbReference>
<dbReference type="Gene3D" id="3.30.710.10">
    <property type="entry name" value="Potassium Channel Kv1.1, Chain A"/>
    <property type="match status" value="1"/>
</dbReference>
<dbReference type="InterPro" id="IPR011705">
    <property type="entry name" value="BACK"/>
</dbReference>
<dbReference type="InterPro" id="IPR000210">
    <property type="entry name" value="BTB/POZ_dom"/>
</dbReference>
<dbReference type="InterPro" id="IPR015915">
    <property type="entry name" value="Kelch-typ_b-propeller"/>
</dbReference>
<dbReference type="InterPro" id="IPR006652">
    <property type="entry name" value="Kelch_1"/>
</dbReference>
<dbReference type="InterPro" id="IPR011333">
    <property type="entry name" value="SKP1/BTB/POZ_sf"/>
</dbReference>
<dbReference type="PANTHER" id="PTHR24412">
    <property type="entry name" value="KELCH PROTEIN"/>
    <property type="match status" value="1"/>
</dbReference>
<dbReference type="PANTHER" id="PTHR24412:SF480">
    <property type="entry name" value="KELCH-LIKE PROTEIN 8"/>
    <property type="match status" value="1"/>
</dbReference>
<dbReference type="Pfam" id="PF07707">
    <property type="entry name" value="BACK"/>
    <property type="match status" value="1"/>
</dbReference>
<dbReference type="Pfam" id="PF00651">
    <property type="entry name" value="BTB"/>
    <property type="match status" value="1"/>
</dbReference>
<dbReference type="Pfam" id="PF01344">
    <property type="entry name" value="Kelch_1"/>
    <property type="match status" value="3"/>
</dbReference>
<dbReference type="SMART" id="SM00875">
    <property type="entry name" value="BACK"/>
    <property type="match status" value="1"/>
</dbReference>
<dbReference type="SMART" id="SM00225">
    <property type="entry name" value="BTB"/>
    <property type="match status" value="1"/>
</dbReference>
<dbReference type="SMART" id="SM00612">
    <property type="entry name" value="Kelch"/>
    <property type="match status" value="3"/>
</dbReference>
<dbReference type="SUPFAM" id="SSF117281">
    <property type="entry name" value="Kelch motif"/>
    <property type="match status" value="1"/>
</dbReference>
<dbReference type="SUPFAM" id="SSF54695">
    <property type="entry name" value="POZ domain"/>
    <property type="match status" value="1"/>
</dbReference>
<dbReference type="PROSITE" id="PS50097">
    <property type="entry name" value="BTB"/>
    <property type="match status" value="1"/>
</dbReference>